<organism>
    <name type="scientific">Staphylococcus aureus (strain COL)</name>
    <dbReference type="NCBI Taxonomy" id="93062"/>
    <lineage>
        <taxon>Bacteria</taxon>
        <taxon>Bacillati</taxon>
        <taxon>Bacillota</taxon>
        <taxon>Bacilli</taxon>
        <taxon>Bacillales</taxon>
        <taxon>Staphylococcaceae</taxon>
        <taxon>Staphylococcus</taxon>
    </lineage>
</organism>
<feature type="chain" id="PRO_0000072972" description="Glycine--tRNA ligase">
    <location>
        <begin position="1"/>
        <end position="463"/>
    </location>
</feature>
<feature type="binding site" evidence="1">
    <location>
        <position position="98"/>
    </location>
    <ligand>
        <name>substrate</name>
    </ligand>
</feature>
<feature type="binding site" evidence="1">
    <location>
        <position position="174"/>
    </location>
    <ligand>
        <name>substrate</name>
    </ligand>
</feature>
<feature type="binding site" evidence="1">
    <location>
        <begin position="206"/>
        <end position="208"/>
    </location>
    <ligand>
        <name>ATP</name>
        <dbReference type="ChEBI" id="CHEBI:30616"/>
    </ligand>
</feature>
<feature type="binding site" evidence="1">
    <location>
        <begin position="216"/>
        <end position="221"/>
    </location>
    <ligand>
        <name>ATP</name>
        <dbReference type="ChEBI" id="CHEBI:30616"/>
    </ligand>
</feature>
<feature type="binding site" evidence="1">
    <location>
        <begin position="221"/>
        <end position="225"/>
    </location>
    <ligand>
        <name>substrate</name>
    </ligand>
</feature>
<feature type="binding site" evidence="1">
    <location>
        <begin position="290"/>
        <end position="291"/>
    </location>
    <ligand>
        <name>ATP</name>
        <dbReference type="ChEBI" id="CHEBI:30616"/>
    </ligand>
</feature>
<feature type="binding site" evidence="1">
    <location>
        <begin position="330"/>
        <end position="334"/>
    </location>
    <ligand>
        <name>substrate</name>
    </ligand>
</feature>
<feature type="binding site" evidence="1">
    <location>
        <begin position="334"/>
        <end position="337"/>
    </location>
    <ligand>
        <name>ATP</name>
        <dbReference type="ChEBI" id="CHEBI:30616"/>
    </ligand>
</feature>
<name>SYG_STAAC</name>
<gene>
    <name evidence="1" type="primary">glyQS</name>
    <name type="ordered locus">SACOL1622</name>
</gene>
<protein>
    <recommendedName>
        <fullName evidence="1">Glycine--tRNA ligase</fullName>
        <ecNumber evidence="1">6.1.1.14</ecNumber>
    </recommendedName>
    <alternativeName>
        <fullName evidence="1">Glycyl-tRNA synthetase</fullName>
        <shortName evidence="1">GlyRS</shortName>
    </alternativeName>
</protein>
<evidence type="ECO:0000255" key="1">
    <source>
        <dbReference type="HAMAP-Rule" id="MF_00253"/>
    </source>
</evidence>
<sequence>MAKDMDTIVSLAKHRGFVFPGSDIYGGLSNTWDYGPLGVELKNNVKKAWWQKFITQSPFNVGIDAAILMNPKVWEASGHLNNFNDPMIDNKDSKIRYRADKLIEDYMQDVKGDENFIADGLSFEQMKKIIDDEGIVCPVSKTANWTEIRQFNLMFKTFQGVTEDSTNEIFLRPETAQGIFVNYKNVQRSMRKKLPFGIGQIGKSFRNEITPGNFIFRTREFEQMELEFFCKPGEEIEWQNYWKTFASDWLTSLNMSSENMRLRDHDEDELSHYSNATTDIEYKFPFGWGELWGIASRTDFDLRKHAEHSGEDFRYHDPETNEKYIPYCIEPSLGADRVTLAFLCDAYDEEGVEGSKDARTVLHFHPALAPYKAAILPLSKKLSGEAIKIFEQLSSKFSIDFDESQSIGKRYRRQDEIGTPYCVTFDFDSLEDNQVTVRDRDSMEQVRMPISELEAFLTEKTKF</sequence>
<dbReference type="EC" id="6.1.1.14" evidence="1"/>
<dbReference type="EMBL" id="CP000046">
    <property type="protein sequence ID" value="AAW38238.1"/>
    <property type="molecule type" value="Genomic_DNA"/>
</dbReference>
<dbReference type="RefSeq" id="WP_001030080.1">
    <property type="nucleotide sequence ID" value="NZ_JBGOFO010000003.1"/>
</dbReference>
<dbReference type="SMR" id="Q5HFJ5"/>
<dbReference type="KEGG" id="sac:SACOL1622"/>
<dbReference type="HOGENOM" id="CLU_015515_2_1_9"/>
<dbReference type="Proteomes" id="UP000000530">
    <property type="component" value="Chromosome"/>
</dbReference>
<dbReference type="GO" id="GO:0005737">
    <property type="term" value="C:cytoplasm"/>
    <property type="evidence" value="ECO:0007669"/>
    <property type="project" value="UniProtKB-SubCell"/>
</dbReference>
<dbReference type="GO" id="GO:0005524">
    <property type="term" value="F:ATP binding"/>
    <property type="evidence" value="ECO:0007669"/>
    <property type="project" value="UniProtKB-UniRule"/>
</dbReference>
<dbReference type="GO" id="GO:0140096">
    <property type="term" value="F:catalytic activity, acting on a protein"/>
    <property type="evidence" value="ECO:0007669"/>
    <property type="project" value="UniProtKB-ARBA"/>
</dbReference>
<dbReference type="GO" id="GO:0004820">
    <property type="term" value="F:glycine-tRNA ligase activity"/>
    <property type="evidence" value="ECO:0000250"/>
    <property type="project" value="UniProtKB"/>
</dbReference>
<dbReference type="GO" id="GO:0046983">
    <property type="term" value="F:protein dimerization activity"/>
    <property type="evidence" value="ECO:0000250"/>
    <property type="project" value="UniProtKB"/>
</dbReference>
<dbReference type="GO" id="GO:0016740">
    <property type="term" value="F:transferase activity"/>
    <property type="evidence" value="ECO:0007669"/>
    <property type="project" value="UniProtKB-ARBA"/>
</dbReference>
<dbReference type="GO" id="GO:0006426">
    <property type="term" value="P:glycyl-tRNA aminoacylation"/>
    <property type="evidence" value="ECO:0007669"/>
    <property type="project" value="UniProtKB-UniRule"/>
</dbReference>
<dbReference type="CDD" id="cd00774">
    <property type="entry name" value="GlyRS-like_core"/>
    <property type="match status" value="1"/>
</dbReference>
<dbReference type="CDD" id="cd00858">
    <property type="entry name" value="GlyRS_anticodon"/>
    <property type="match status" value="1"/>
</dbReference>
<dbReference type="FunFam" id="3.40.50.800:FF:000002">
    <property type="entry name" value="Glycine--tRNA ligase"/>
    <property type="match status" value="1"/>
</dbReference>
<dbReference type="Gene3D" id="3.30.40.230">
    <property type="match status" value="1"/>
</dbReference>
<dbReference type="Gene3D" id="3.40.50.800">
    <property type="entry name" value="Anticodon-binding domain"/>
    <property type="match status" value="1"/>
</dbReference>
<dbReference type="Gene3D" id="3.30.930.10">
    <property type="entry name" value="Bira Bifunctional Protein, Domain 2"/>
    <property type="match status" value="1"/>
</dbReference>
<dbReference type="HAMAP" id="MF_00253_B">
    <property type="entry name" value="Gly_tRNA_synth_B"/>
    <property type="match status" value="1"/>
</dbReference>
<dbReference type="InterPro" id="IPR002314">
    <property type="entry name" value="aa-tRNA-synt_IIb"/>
</dbReference>
<dbReference type="InterPro" id="IPR006195">
    <property type="entry name" value="aa-tRNA-synth_II"/>
</dbReference>
<dbReference type="InterPro" id="IPR045864">
    <property type="entry name" value="aa-tRNA-synth_II/BPL/LPL"/>
</dbReference>
<dbReference type="InterPro" id="IPR004154">
    <property type="entry name" value="Anticodon-bd"/>
</dbReference>
<dbReference type="InterPro" id="IPR036621">
    <property type="entry name" value="Anticodon-bd_dom_sf"/>
</dbReference>
<dbReference type="InterPro" id="IPR027031">
    <property type="entry name" value="Gly-tRNA_synthase/POLG2"/>
</dbReference>
<dbReference type="InterPro" id="IPR022961">
    <property type="entry name" value="Gly_tRNA_ligase_bac"/>
</dbReference>
<dbReference type="InterPro" id="IPR033731">
    <property type="entry name" value="GlyRS-like_core"/>
</dbReference>
<dbReference type="InterPro" id="IPR002315">
    <property type="entry name" value="tRNA-synt_gly"/>
</dbReference>
<dbReference type="NCBIfam" id="TIGR00389">
    <property type="entry name" value="glyS_dimeric"/>
    <property type="match status" value="1"/>
</dbReference>
<dbReference type="NCBIfam" id="NF003211">
    <property type="entry name" value="PRK04173.1"/>
    <property type="match status" value="1"/>
</dbReference>
<dbReference type="PANTHER" id="PTHR10745:SF8">
    <property type="entry name" value="DNA POLYMERASE SUBUNIT GAMMA-2, MITOCHONDRIAL"/>
    <property type="match status" value="1"/>
</dbReference>
<dbReference type="PANTHER" id="PTHR10745">
    <property type="entry name" value="GLYCYL-TRNA SYNTHETASE/DNA POLYMERASE SUBUNIT GAMMA-2"/>
    <property type="match status" value="1"/>
</dbReference>
<dbReference type="Pfam" id="PF03129">
    <property type="entry name" value="HGTP_anticodon"/>
    <property type="match status" value="1"/>
</dbReference>
<dbReference type="Pfam" id="PF00587">
    <property type="entry name" value="tRNA-synt_2b"/>
    <property type="match status" value="1"/>
</dbReference>
<dbReference type="PRINTS" id="PR01043">
    <property type="entry name" value="TRNASYNTHGLY"/>
</dbReference>
<dbReference type="SUPFAM" id="SSF52954">
    <property type="entry name" value="Class II aaRS ABD-related"/>
    <property type="match status" value="1"/>
</dbReference>
<dbReference type="SUPFAM" id="SSF55681">
    <property type="entry name" value="Class II aaRS and biotin synthetases"/>
    <property type="match status" value="1"/>
</dbReference>
<dbReference type="PROSITE" id="PS50862">
    <property type="entry name" value="AA_TRNA_LIGASE_II"/>
    <property type="match status" value="1"/>
</dbReference>
<reference key="1">
    <citation type="journal article" date="2005" name="J. Bacteriol.">
        <title>Insights on evolution of virulence and resistance from the complete genome analysis of an early methicillin-resistant Staphylococcus aureus strain and a biofilm-producing methicillin-resistant Staphylococcus epidermidis strain.</title>
        <authorList>
            <person name="Gill S.R."/>
            <person name="Fouts D.E."/>
            <person name="Archer G.L."/>
            <person name="Mongodin E.F."/>
            <person name="DeBoy R.T."/>
            <person name="Ravel J."/>
            <person name="Paulsen I.T."/>
            <person name="Kolonay J.F."/>
            <person name="Brinkac L.M."/>
            <person name="Beanan M.J."/>
            <person name="Dodson R.J."/>
            <person name="Daugherty S.C."/>
            <person name="Madupu R."/>
            <person name="Angiuoli S.V."/>
            <person name="Durkin A.S."/>
            <person name="Haft D.H."/>
            <person name="Vamathevan J.J."/>
            <person name="Khouri H."/>
            <person name="Utterback T.R."/>
            <person name="Lee C."/>
            <person name="Dimitrov G."/>
            <person name="Jiang L."/>
            <person name="Qin H."/>
            <person name="Weidman J."/>
            <person name="Tran K."/>
            <person name="Kang K.H."/>
            <person name="Hance I.R."/>
            <person name="Nelson K.E."/>
            <person name="Fraser C.M."/>
        </authorList>
    </citation>
    <scope>NUCLEOTIDE SEQUENCE [LARGE SCALE GENOMIC DNA]</scope>
    <source>
        <strain>COL</strain>
    </source>
</reference>
<accession>Q5HFJ5</accession>
<proteinExistence type="inferred from homology"/>
<comment type="function">
    <text evidence="1">Catalyzes the attachment of glycine to tRNA(Gly).</text>
</comment>
<comment type="catalytic activity">
    <reaction evidence="1">
        <text>tRNA(Gly) + glycine + ATP = glycyl-tRNA(Gly) + AMP + diphosphate</text>
        <dbReference type="Rhea" id="RHEA:16013"/>
        <dbReference type="Rhea" id="RHEA-COMP:9664"/>
        <dbReference type="Rhea" id="RHEA-COMP:9683"/>
        <dbReference type="ChEBI" id="CHEBI:30616"/>
        <dbReference type="ChEBI" id="CHEBI:33019"/>
        <dbReference type="ChEBI" id="CHEBI:57305"/>
        <dbReference type="ChEBI" id="CHEBI:78442"/>
        <dbReference type="ChEBI" id="CHEBI:78522"/>
        <dbReference type="ChEBI" id="CHEBI:456215"/>
        <dbReference type="EC" id="6.1.1.14"/>
    </reaction>
</comment>
<comment type="subunit">
    <text evidence="1">Homodimer.</text>
</comment>
<comment type="subcellular location">
    <subcellularLocation>
        <location evidence="1">Cytoplasm</location>
    </subcellularLocation>
</comment>
<comment type="similarity">
    <text evidence="1">Belongs to the class-II aminoacyl-tRNA synthetase family.</text>
</comment>
<keyword id="KW-0030">Aminoacyl-tRNA synthetase</keyword>
<keyword id="KW-0067">ATP-binding</keyword>
<keyword id="KW-0963">Cytoplasm</keyword>
<keyword id="KW-0436">Ligase</keyword>
<keyword id="KW-0547">Nucleotide-binding</keyword>
<keyword id="KW-0648">Protein biosynthesis</keyword>